<feature type="chain" id="PRO_1000184355" description="ATP synthase subunit c">
    <location>
        <begin position="1"/>
        <end position="81"/>
    </location>
</feature>
<feature type="transmembrane region" description="Helical" evidence="1">
    <location>
        <begin position="6"/>
        <end position="26"/>
    </location>
</feature>
<feature type="transmembrane region" description="Helical" evidence="1">
    <location>
        <begin position="57"/>
        <end position="77"/>
    </location>
</feature>
<feature type="site" description="Reversibly protonated during proton transport" evidence="1">
    <location>
        <position position="61"/>
    </location>
</feature>
<protein>
    <recommendedName>
        <fullName evidence="1">ATP synthase subunit c</fullName>
    </recommendedName>
    <alternativeName>
        <fullName evidence="1">ATP synthase F(0) sector subunit c</fullName>
    </alternativeName>
    <alternativeName>
        <fullName evidence="1">F-type ATPase subunit c</fullName>
        <shortName evidence="1">F-ATPase subunit c</shortName>
    </alternativeName>
    <alternativeName>
        <fullName evidence="1">Lipid-binding protein</fullName>
    </alternativeName>
</protein>
<reference key="1">
    <citation type="journal article" date="2011" name="MBio">
        <title>Novel metabolic attributes of the genus Cyanothece, comprising a group of unicellular nitrogen-fixing Cyanobacteria.</title>
        <authorList>
            <person name="Bandyopadhyay A."/>
            <person name="Elvitigala T."/>
            <person name="Welsh E."/>
            <person name="Stockel J."/>
            <person name="Liberton M."/>
            <person name="Min H."/>
            <person name="Sherman L.A."/>
            <person name="Pakrasi H.B."/>
        </authorList>
    </citation>
    <scope>NUCLEOTIDE SEQUENCE [LARGE SCALE GENOMIC DNA]</scope>
    <source>
        <strain>PCC 8801 / RF-1</strain>
    </source>
</reference>
<keyword id="KW-0066">ATP synthesis</keyword>
<keyword id="KW-0138">CF(0)</keyword>
<keyword id="KW-0375">Hydrogen ion transport</keyword>
<keyword id="KW-0406">Ion transport</keyword>
<keyword id="KW-0446">Lipid-binding</keyword>
<keyword id="KW-0472">Membrane</keyword>
<keyword id="KW-1185">Reference proteome</keyword>
<keyword id="KW-0793">Thylakoid</keyword>
<keyword id="KW-0812">Transmembrane</keyword>
<keyword id="KW-1133">Transmembrane helix</keyword>
<keyword id="KW-0813">Transport</keyword>
<evidence type="ECO:0000255" key="1">
    <source>
        <dbReference type="HAMAP-Rule" id="MF_01396"/>
    </source>
</evidence>
<gene>
    <name evidence="1" type="primary">atpE</name>
    <name evidence="1" type="synonym">atpH</name>
    <name type="ordered locus">PCC8801_2716</name>
</gene>
<organism>
    <name type="scientific">Rippkaea orientalis (strain PCC 8801 / RF-1)</name>
    <name type="common">Cyanothece sp. (strain PCC 8801)</name>
    <dbReference type="NCBI Taxonomy" id="41431"/>
    <lineage>
        <taxon>Bacteria</taxon>
        <taxon>Bacillati</taxon>
        <taxon>Cyanobacteriota</taxon>
        <taxon>Cyanophyceae</taxon>
        <taxon>Oscillatoriophycideae</taxon>
        <taxon>Chroococcales</taxon>
        <taxon>Aphanothecaceae</taxon>
        <taxon>Rippkaea</taxon>
        <taxon>Rippkaea orientalis</taxon>
    </lineage>
</organism>
<comment type="function">
    <text evidence="1">F(1)F(0) ATP synthase produces ATP from ADP in the presence of a proton or sodium gradient. F-type ATPases consist of two structural domains, F(1) containing the extramembraneous catalytic core and F(0) containing the membrane proton channel, linked together by a central stalk and a peripheral stalk. During catalysis, ATP synthesis in the catalytic domain of F(1) is coupled via a rotary mechanism of the central stalk subunits to proton translocation.</text>
</comment>
<comment type="function">
    <text evidence="1">Key component of the F(0) channel; it plays a direct role in translocation across the membrane. A homomeric c-ring of between 10-14 subunits forms the central stalk rotor element with the F(1) delta and epsilon subunits.</text>
</comment>
<comment type="subunit">
    <text evidence="1">F-type ATPases have 2 components, F(1) - the catalytic core - and F(0) - the membrane proton channel. F(1) has five subunits: alpha(3), beta(3), gamma(1), delta(1), epsilon(1). F(0) has four main subunits: a(1), b(1), b'(1) and c(10-14). The alpha and beta chains form an alternating ring which encloses part of the gamma chain. F(1) is attached to F(0) by a central stalk formed by the gamma and epsilon chains, while a peripheral stalk is formed by the delta, b and b' chains.</text>
</comment>
<comment type="subcellular location">
    <subcellularLocation>
        <location evidence="1">Cellular thylakoid membrane</location>
        <topology evidence="1">Multi-pass membrane protein</topology>
    </subcellularLocation>
</comment>
<comment type="similarity">
    <text evidence="1">Belongs to the ATPase C chain family.</text>
</comment>
<sequence>MNPTVAAASVIAAALAVGLAAIGPGFGQGNASGEAVSGIARQPEAEGKIRGTLLLSLAFMESLTIYGLVIALVLLFANPFA</sequence>
<dbReference type="EMBL" id="CP001287">
    <property type="protein sequence ID" value="ACK66717.1"/>
    <property type="molecule type" value="Genomic_DNA"/>
</dbReference>
<dbReference type="RefSeq" id="WP_012595984.1">
    <property type="nucleotide sequence ID" value="NC_011726.1"/>
</dbReference>
<dbReference type="SMR" id="B7K5I4"/>
<dbReference type="STRING" id="41431.PCC8801_2716"/>
<dbReference type="KEGG" id="cyp:PCC8801_2716"/>
<dbReference type="eggNOG" id="COG0636">
    <property type="taxonomic scope" value="Bacteria"/>
</dbReference>
<dbReference type="HOGENOM" id="CLU_148047_2_0_3"/>
<dbReference type="OrthoDB" id="9810379at2"/>
<dbReference type="Proteomes" id="UP000008204">
    <property type="component" value="Chromosome"/>
</dbReference>
<dbReference type="GO" id="GO:0031676">
    <property type="term" value="C:plasma membrane-derived thylakoid membrane"/>
    <property type="evidence" value="ECO:0007669"/>
    <property type="project" value="UniProtKB-SubCell"/>
</dbReference>
<dbReference type="GO" id="GO:0045259">
    <property type="term" value="C:proton-transporting ATP synthase complex"/>
    <property type="evidence" value="ECO:0007669"/>
    <property type="project" value="UniProtKB-KW"/>
</dbReference>
<dbReference type="GO" id="GO:0033177">
    <property type="term" value="C:proton-transporting two-sector ATPase complex, proton-transporting domain"/>
    <property type="evidence" value="ECO:0007669"/>
    <property type="project" value="InterPro"/>
</dbReference>
<dbReference type="GO" id="GO:0008289">
    <property type="term" value="F:lipid binding"/>
    <property type="evidence" value="ECO:0007669"/>
    <property type="project" value="UniProtKB-KW"/>
</dbReference>
<dbReference type="GO" id="GO:0046933">
    <property type="term" value="F:proton-transporting ATP synthase activity, rotational mechanism"/>
    <property type="evidence" value="ECO:0007669"/>
    <property type="project" value="UniProtKB-UniRule"/>
</dbReference>
<dbReference type="CDD" id="cd18183">
    <property type="entry name" value="ATP-synt_Fo_c_ATPH"/>
    <property type="match status" value="1"/>
</dbReference>
<dbReference type="FunFam" id="1.20.20.10:FF:000001">
    <property type="entry name" value="ATP synthase subunit c, chloroplastic"/>
    <property type="match status" value="1"/>
</dbReference>
<dbReference type="Gene3D" id="1.20.20.10">
    <property type="entry name" value="F1F0 ATP synthase subunit C"/>
    <property type="match status" value="1"/>
</dbReference>
<dbReference type="HAMAP" id="MF_01396">
    <property type="entry name" value="ATP_synth_c_bact"/>
    <property type="match status" value="1"/>
</dbReference>
<dbReference type="InterPro" id="IPR005953">
    <property type="entry name" value="ATP_synth_csu_bac/chlpt"/>
</dbReference>
<dbReference type="InterPro" id="IPR000454">
    <property type="entry name" value="ATP_synth_F0_csu"/>
</dbReference>
<dbReference type="InterPro" id="IPR020537">
    <property type="entry name" value="ATP_synth_F0_csu_DDCD_BS"/>
</dbReference>
<dbReference type="InterPro" id="IPR038662">
    <property type="entry name" value="ATP_synth_F0_csu_sf"/>
</dbReference>
<dbReference type="InterPro" id="IPR002379">
    <property type="entry name" value="ATPase_proteolipid_c-like_dom"/>
</dbReference>
<dbReference type="InterPro" id="IPR035921">
    <property type="entry name" value="F/V-ATP_Csub_sf"/>
</dbReference>
<dbReference type="NCBIfam" id="TIGR01260">
    <property type="entry name" value="ATP_synt_c"/>
    <property type="match status" value="1"/>
</dbReference>
<dbReference type="NCBIfam" id="NF005608">
    <property type="entry name" value="PRK07354.1"/>
    <property type="match status" value="1"/>
</dbReference>
<dbReference type="PANTHER" id="PTHR10031">
    <property type="entry name" value="ATP SYNTHASE LIPID-BINDING PROTEIN, MITOCHONDRIAL"/>
    <property type="match status" value="1"/>
</dbReference>
<dbReference type="PANTHER" id="PTHR10031:SF0">
    <property type="entry name" value="ATPASE PROTEIN 9"/>
    <property type="match status" value="1"/>
</dbReference>
<dbReference type="Pfam" id="PF00137">
    <property type="entry name" value="ATP-synt_C"/>
    <property type="match status" value="1"/>
</dbReference>
<dbReference type="PRINTS" id="PR00124">
    <property type="entry name" value="ATPASEC"/>
</dbReference>
<dbReference type="SUPFAM" id="SSF81333">
    <property type="entry name" value="F1F0 ATP synthase subunit C"/>
    <property type="match status" value="1"/>
</dbReference>
<dbReference type="PROSITE" id="PS00605">
    <property type="entry name" value="ATPASE_C"/>
    <property type="match status" value="1"/>
</dbReference>
<accession>B7K5I4</accession>
<proteinExistence type="inferred from homology"/>
<name>ATPL_RIPO1</name>